<organism>
    <name type="scientific">Clostridium tetani (strain Massachusetts / E88)</name>
    <dbReference type="NCBI Taxonomy" id="212717"/>
    <lineage>
        <taxon>Bacteria</taxon>
        <taxon>Bacillati</taxon>
        <taxon>Bacillota</taxon>
        <taxon>Clostridia</taxon>
        <taxon>Eubacteriales</taxon>
        <taxon>Clostridiaceae</taxon>
        <taxon>Clostridium</taxon>
    </lineage>
</organism>
<comment type="function">
    <text evidence="1">Catalyzes the conversion of glucosamine-6-phosphate to glucosamine-1-phosphate.</text>
</comment>
<comment type="catalytic activity">
    <reaction evidence="1">
        <text>alpha-D-glucosamine 1-phosphate = D-glucosamine 6-phosphate</text>
        <dbReference type="Rhea" id="RHEA:23424"/>
        <dbReference type="ChEBI" id="CHEBI:58516"/>
        <dbReference type="ChEBI" id="CHEBI:58725"/>
        <dbReference type="EC" id="5.4.2.10"/>
    </reaction>
</comment>
<comment type="cofactor">
    <cofactor evidence="1">
        <name>Mg(2+)</name>
        <dbReference type="ChEBI" id="CHEBI:18420"/>
    </cofactor>
    <text evidence="1">Binds 1 Mg(2+) ion per subunit.</text>
</comment>
<comment type="PTM">
    <text evidence="1">Activated by phosphorylation.</text>
</comment>
<comment type="similarity">
    <text evidence="1">Belongs to the phosphohexose mutase family.</text>
</comment>
<feature type="chain" id="PRO_0000147875" description="Phosphoglucosamine mutase">
    <location>
        <begin position="1"/>
        <end position="448"/>
    </location>
</feature>
<feature type="active site" description="Phosphoserine intermediate" evidence="1">
    <location>
        <position position="100"/>
    </location>
</feature>
<feature type="binding site" description="via phosphate group" evidence="1">
    <location>
        <position position="100"/>
    </location>
    <ligand>
        <name>Mg(2+)</name>
        <dbReference type="ChEBI" id="CHEBI:18420"/>
    </ligand>
</feature>
<feature type="binding site" evidence="1">
    <location>
        <position position="240"/>
    </location>
    <ligand>
        <name>Mg(2+)</name>
        <dbReference type="ChEBI" id="CHEBI:18420"/>
    </ligand>
</feature>
<feature type="binding site" evidence="1">
    <location>
        <position position="242"/>
    </location>
    <ligand>
        <name>Mg(2+)</name>
        <dbReference type="ChEBI" id="CHEBI:18420"/>
    </ligand>
</feature>
<feature type="binding site" evidence="1">
    <location>
        <position position="244"/>
    </location>
    <ligand>
        <name>Mg(2+)</name>
        <dbReference type="ChEBI" id="CHEBI:18420"/>
    </ligand>
</feature>
<feature type="modified residue" description="Phosphoserine" evidence="1">
    <location>
        <position position="100"/>
    </location>
</feature>
<evidence type="ECO:0000255" key="1">
    <source>
        <dbReference type="HAMAP-Rule" id="MF_01554"/>
    </source>
</evidence>
<protein>
    <recommendedName>
        <fullName evidence="1">Phosphoglucosamine mutase</fullName>
        <ecNumber evidence="1">5.4.2.10</ecNumber>
    </recommendedName>
</protein>
<dbReference type="EC" id="5.4.2.10" evidence="1"/>
<dbReference type="EMBL" id="AE015927">
    <property type="protein sequence ID" value="AAO37004.1"/>
    <property type="molecule type" value="Genomic_DNA"/>
</dbReference>
<dbReference type="RefSeq" id="WP_011100665.1">
    <property type="nucleotide sequence ID" value="NC_004557.1"/>
</dbReference>
<dbReference type="SMR" id="Q890U1"/>
<dbReference type="STRING" id="212717.CTC_02544"/>
<dbReference type="GeneID" id="24254141"/>
<dbReference type="KEGG" id="ctc:CTC_02544"/>
<dbReference type="HOGENOM" id="CLU_016950_7_0_9"/>
<dbReference type="OrthoDB" id="9806956at2"/>
<dbReference type="Proteomes" id="UP000001412">
    <property type="component" value="Chromosome"/>
</dbReference>
<dbReference type="GO" id="GO:0005829">
    <property type="term" value="C:cytosol"/>
    <property type="evidence" value="ECO:0007669"/>
    <property type="project" value="TreeGrafter"/>
</dbReference>
<dbReference type="GO" id="GO:0000287">
    <property type="term" value="F:magnesium ion binding"/>
    <property type="evidence" value="ECO:0007669"/>
    <property type="project" value="UniProtKB-UniRule"/>
</dbReference>
<dbReference type="GO" id="GO:0008966">
    <property type="term" value="F:phosphoglucosamine mutase activity"/>
    <property type="evidence" value="ECO:0007669"/>
    <property type="project" value="UniProtKB-UniRule"/>
</dbReference>
<dbReference type="GO" id="GO:0004615">
    <property type="term" value="F:phosphomannomutase activity"/>
    <property type="evidence" value="ECO:0007669"/>
    <property type="project" value="TreeGrafter"/>
</dbReference>
<dbReference type="GO" id="GO:0005975">
    <property type="term" value="P:carbohydrate metabolic process"/>
    <property type="evidence" value="ECO:0007669"/>
    <property type="project" value="InterPro"/>
</dbReference>
<dbReference type="GO" id="GO:0009252">
    <property type="term" value="P:peptidoglycan biosynthetic process"/>
    <property type="evidence" value="ECO:0007669"/>
    <property type="project" value="TreeGrafter"/>
</dbReference>
<dbReference type="GO" id="GO:0006048">
    <property type="term" value="P:UDP-N-acetylglucosamine biosynthetic process"/>
    <property type="evidence" value="ECO:0007669"/>
    <property type="project" value="TreeGrafter"/>
</dbReference>
<dbReference type="CDD" id="cd05802">
    <property type="entry name" value="GlmM"/>
    <property type="match status" value="1"/>
</dbReference>
<dbReference type="FunFam" id="3.30.310.50:FF:000001">
    <property type="entry name" value="Phosphoglucosamine mutase"/>
    <property type="match status" value="1"/>
</dbReference>
<dbReference type="FunFam" id="3.40.120.10:FF:000001">
    <property type="entry name" value="Phosphoglucosamine mutase"/>
    <property type="match status" value="1"/>
</dbReference>
<dbReference type="FunFam" id="3.40.120.10:FF:000002">
    <property type="entry name" value="Phosphoglucosamine mutase"/>
    <property type="match status" value="1"/>
</dbReference>
<dbReference type="Gene3D" id="3.40.120.10">
    <property type="entry name" value="Alpha-D-Glucose-1,6-Bisphosphate, subunit A, domain 3"/>
    <property type="match status" value="3"/>
</dbReference>
<dbReference type="Gene3D" id="3.30.310.50">
    <property type="entry name" value="Alpha-D-phosphohexomutase, C-terminal domain"/>
    <property type="match status" value="1"/>
</dbReference>
<dbReference type="HAMAP" id="MF_01554_B">
    <property type="entry name" value="GlmM_B"/>
    <property type="match status" value="1"/>
</dbReference>
<dbReference type="InterPro" id="IPR005844">
    <property type="entry name" value="A-D-PHexomutase_a/b/a-I"/>
</dbReference>
<dbReference type="InterPro" id="IPR016055">
    <property type="entry name" value="A-D-PHexomutase_a/b/a-I/II/III"/>
</dbReference>
<dbReference type="InterPro" id="IPR005845">
    <property type="entry name" value="A-D-PHexomutase_a/b/a-II"/>
</dbReference>
<dbReference type="InterPro" id="IPR005846">
    <property type="entry name" value="A-D-PHexomutase_a/b/a-III"/>
</dbReference>
<dbReference type="InterPro" id="IPR005843">
    <property type="entry name" value="A-D-PHexomutase_C"/>
</dbReference>
<dbReference type="InterPro" id="IPR036900">
    <property type="entry name" value="A-D-PHexomutase_C_sf"/>
</dbReference>
<dbReference type="InterPro" id="IPR016066">
    <property type="entry name" value="A-D-PHexomutase_CS"/>
</dbReference>
<dbReference type="InterPro" id="IPR005841">
    <property type="entry name" value="Alpha-D-phosphohexomutase_SF"/>
</dbReference>
<dbReference type="InterPro" id="IPR006352">
    <property type="entry name" value="GlmM_bact"/>
</dbReference>
<dbReference type="InterPro" id="IPR050060">
    <property type="entry name" value="Phosphoglucosamine_mutase"/>
</dbReference>
<dbReference type="NCBIfam" id="TIGR01455">
    <property type="entry name" value="glmM"/>
    <property type="match status" value="1"/>
</dbReference>
<dbReference type="NCBIfam" id="NF008139">
    <property type="entry name" value="PRK10887.1"/>
    <property type="match status" value="1"/>
</dbReference>
<dbReference type="PANTHER" id="PTHR42946:SF1">
    <property type="entry name" value="PHOSPHOGLUCOMUTASE (ALPHA-D-GLUCOSE-1,6-BISPHOSPHATE-DEPENDENT)"/>
    <property type="match status" value="1"/>
</dbReference>
<dbReference type="PANTHER" id="PTHR42946">
    <property type="entry name" value="PHOSPHOHEXOSE MUTASE"/>
    <property type="match status" value="1"/>
</dbReference>
<dbReference type="Pfam" id="PF02878">
    <property type="entry name" value="PGM_PMM_I"/>
    <property type="match status" value="1"/>
</dbReference>
<dbReference type="Pfam" id="PF02879">
    <property type="entry name" value="PGM_PMM_II"/>
    <property type="match status" value="1"/>
</dbReference>
<dbReference type="Pfam" id="PF02880">
    <property type="entry name" value="PGM_PMM_III"/>
    <property type="match status" value="1"/>
</dbReference>
<dbReference type="Pfam" id="PF00408">
    <property type="entry name" value="PGM_PMM_IV"/>
    <property type="match status" value="1"/>
</dbReference>
<dbReference type="PRINTS" id="PR00509">
    <property type="entry name" value="PGMPMM"/>
</dbReference>
<dbReference type="SUPFAM" id="SSF55957">
    <property type="entry name" value="Phosphoglucomutase, C-terminal domain"/>
    <property type="match status" value="1"/>
</dbReference>
<dbReference type="SUPFAM" id="SSF53738">
    <property type="entry name" value="Phosphoglucomutase, first 3 domains"/>
    <property type="match status" value="3"/>
</dbReference>
<dbReference type="PROSITE" id="PS00710">
    <property type="entry name" value="PGM_PMM"/>
    <property type="match status" value="1"/>
</dbReference>
<keyword id="KW-0413">Isomerase</keyword>
<keyword id="KW-0460">Magnesium</keyword>
<keyword id="KW-0479">Metal-binding</keyword>
<keyword id="KW-0597">Phosphoprotein</keyword>
<keyword id="KW-1185">Reference proteome</keyword>
<reference key="1">
    <citation type="journal article" date="2003" name="Proc. Natl. Acad. Sci. U.S.A.">
        <title>The genome sequence of Clostridium tetani, the causative agent of tetanus disease.</title>
        <authorList>
            <person name="Brueggemann H."/>
            <person name="Baeumer S."/>
            <person name="Fricke W.F."/>
            <person name="Wiezer A."/>
            <person name="Liesegang H."/>
            <person name="Decker I."/>
            <person name="Herzberg C."/>
            <person name="Martinez-Arias R."/>
            <person name="Merkl R."/>
            <person name="Henne A."/>
            <person name="Gottschalk G."/>
        </authorList>
    </citation>
    <scope>NUCLEOTIDE SEQUENCE [LARGE SCALE GENOMIC DNA]</scope>
    <source>
        <strain>Massachusetts / E88</strain>
    </source>
</reference>
<proteinExistence type="inferred from homology"/>
<sequence length="448" mass="49027">MSRMFGTDGVRGIANEELTAEVAYNLGKAGAYVLTEGTHKPKIVVGMDTRISGHMLESALVAGILSMGGEAICLGIVPTPAVAHLTRKYGADAGVVISASHNPVEYNGIKFFDKGGYKLPDELEDRIQSVIENNFEGVPCPTGEDIGEKTIIDDAIKDYIEFAKGTIKGDLKGLRVALDCANGASYKASVETFKDLGAEVYVINNEPNGKNINKDCGSTHMESLRKYVVEKGCDFGLAFDGDADRCLAVDEKGNIVNGDFMMAICAKYMKDHKKLDKNTMVVTVMSNIGLFIAMEREKIDLIKTKVGDRYVLEEMLKEGYKIGGEQSGHIIFLDYNTTGDGLVTALQLSSIIKDSNKKLSELASIMKELPQVLLNAKVTNNMKNIYIEDEEIAGEIKKIEEQMEGKGRVLIRPSGTEPLVRVMLEGENQEEIDKIAHDLVKLIEKKTK</sequence>
<gene>
    <name evidence="1" type="primary">glmM</name>
    <name type="ordered locus">CTC_02544</name>
</gene>
<accession>Q890U1</accession>
<name>GLMM_CLOTE</name>